<dbReference type="EMBL" id="AF467912">
    <property type="protein sequence ID" value="AAO33398.1"/>
    <property type="molecule type" value="mRNA"/>
</dbReference>
<dbReference type="EMBL" id="BC076256">
    <property type="protein sequence ID" value="AAH76256.1"/>
    <property type="molecule type" value="mRNA"/>
</dbReference>
<dbReference type="RefSeq" id="NP_991137.2">
    <property type="nucleotide sequence ID" value="NM_205574.2"/>
</dbReference>
<dbReference type="RefSeq" id="XP_005161849.1">
    <property type="nucleotide sequence ID" value="XM_005161792.3"/>
</dbReference>
<dbReference type="RefSeq" id="XP_017208596.1">
    <property type="nucleotide sequence ID" value="XM_017353107.1"/>
</dbReference>
<dbReference type="SMR" id="Q804W2"/>
<dbReference type="FunCoup" id="Q804W2">
    <property type="interactions" value="426"/>
</dbReference>
<dbReference type="STRING" id="7955.ENSDARP00000122628"/>
<dbReference type="PaxDb" id="7955-ENSDARP00000113048"/>
<dbReference type="Ensembl" id="ENSDART00000040761">
    <property type="protein sequence ID" value="ENSDARP00000040760"/>
    <property type="gene ID" value="ENSDARG00000034705"/>
</dbReference>
<dbReference type="Ensembl" id="ENSDART00000129859">
    <property type="protein sequence ID" value="ENSDARP00000109181"/>
    <property type="gene ID" value="ENSDARG00000109277"/>
</dbReference>
<dbReference type="Ensembl" id="ENSDART00000131386">
    <property type="protein sequence ID" value="ENSDARP00000113048"/>
    <property type="gene ID" value="ENSDARG00000034705"/>
</dbReference>
<dbReference type="Ensembl" id="ENSDART00000132702">
    <property type="protein sequence ID" value="ENSDARP00000122628"/>
    <property type="gene ID" value="ENSDARG00000034705"/>
</dbReference>
<dbReference type="Ensembl" id="ENSDART00000183161">
    <property type="protein sequence ID" value="ENSDARP00000147039"/>
    <property type="gene ID" value="ENSDARG00000034705"/>
</dbReference>
<dbReference type="Ensembl" id="ENSDART00000189515">
    <property type="protein sequence ID" value="ENSDARP00000148703"/>
    <property type="gene ID" value="ENSDARG00000034705"/>
</dbReference>
<dbReference type="GeneID" id="402807"/>
<dbReference type="KEGG" id="dre:402807"/>
<dbReference type="AGR" id="ZFIN:ZDB-GENE-040718-285"/>
<dbReference type="CTD" id="402807"/>
<dbReference type="ZFIN" id="ZDB-GENE-040718-285">
    <property type="gene designation" value="pvalb7"/>
</dbReference>
<dbReference type="eggNOG" id="KOG0027">
    <property type="taxonomic scope" value="Eukaryota"/>
</dbReference>
<dbReference type="HOGENOM" id="CLU_157356_0_0_1"/>
<dbReference type="InParanoid" id="Q804W2"/>
<dbReference type="OMA" id="FEMVGMR"/>
<dbReference type="OrthoDB" id="26525at2759"/>
<dbReference type="PhylomeDB" id="Q804W2"/>
<dbReference type="TreeFam" id="TF332342"/>
<dbReference type="PRO" id="PR:Q804W2"/>
<dbReference type="Proteomes" id="UP000000437">
    <property type="component" value="Alternate scaffold 22"/>
</dbReference>
<dbReference type="Proteomes" id="UP000000437">
    <property type="component" value="Chromosome 22"/>
</dbReference>
<dbReference type="Bgee" id="ENSDARG00000034705">
    <property type="expression patterns" value="Expressed in pharyngeal gill and 15 other cell types or tissues"/>
</dbReference>
<dbReference type="ExpressionAtlas" id="Q804W2">
    <property type="expression patterns" value="baseline and differential"/>
</dbReference>
<dbReference type="GO" id="GO:0005737">
    <property type="term" value="C:cytoplasm"/>
    <property type="evidence" value="ECO:0000318"/>
    <property type="project" value="GO_Central"/>
</dbReference>
<dbReference type="GO" id="GO:0005509">
    <property type="term" value="F:calcium ion binding"/>
    <property type="evidence" value="ECO:0000318"/>
    <property type="project" value="GO_Central"/>
</dbReference>
<dbReference type="FunFam" id="1.10.238.10:FF:000060">
    <property type="entry name" value="Parvalbumin, thymic"/>
    <property type="match status" value="1"/>
</dbReference>
<dbReference type="Gene3D" id="1.10.238.10">
    <property type="entry name" value="EF-hand"/>
    <property type="match status" value="1"/>
</dbReference>
<dbReference type="InterPro" id="IPR011992">
    <property type="entry name" value="EF-hand-dom_pair"/>
</dbReference>
<dbReference type="InterPro" id="IPR018247">
    <property type="entry name" value="EF_Hand_1_Ca_BS"/>
</dbReference>
<dbReference type="InterPro" id="IPR002048">
    <property type="entry name" value="EF_hand_dom"/>
</dbReference>
<dbReference type="InterPro" id="IPR008080">
    <property type="entry name" value="Parvalbumin"/>
</dbReference>
<dbReference type="PANTHER" id="PTHR11653">
    <property type="entry name" value="PARVALBUMIN ALPHA"/>
    <property type="match status" value="1"/>
</dbReference>
<dbReference type="PANTHER" id="PTHR11653:SF21">
    <property type="entry name" value="PARVALBUMIN-7"/>
    <property type="match status" value="1"/>
</dbReference>
<dbReference type="Pfam" id="PF13499">
    <property type="entry name" value="EF-hand_7"/>
    <property type="match status" value="1"/>
</dbReference>
<dbReference type="PRINTS" id="PR01697">
    <property type="entry name" value="PARVALBUMIN"/>
</dbReference>
<dbReference type="SMART" id="SM00054">
    <property type="entry name" value="EFh"/>
    <property type="match status" value="2"/>
</dbReference>
<dbReference type="SUPFAM" id="SSF47473">
    <property type="entry name" value="EF-hand"/>
    <property type="match status" value="1"/>
</dbReference>
<dbReference type="PROSITE" id="PS00018">
    <property type="entry name" value="EF_HAND_1"/>
    <property type="match status" value="2"/>
</dbReference>
<dbReference type="PROSITE" id="PS50222">
    <property type="entry name" value="EF_HAND_2"/>
    <property type="match status" value="2"/>
</dbReference>
<comment type="function">
    <text evidence="1">In muscle, parvalbumin is thought to be involved in relaxation after contraction. It binds two calcium ions (By similarity).</text>
</comment>
<comment type="similarity">
    <text evidence="3">Belongs to the parvalbumin family.</text>
</comment>
<sequence length="109" mass="12029">MAMKNLLKDDDIKKALDQFKAADSFDHKKFFDVVGLKALSADNVKLVFKALDVDASGFIEEEELKFVLKGFSADGRDLTDKETKAFLAAADKDGDGKIGIDEFEALVHE</sequence>
<evidence type="ECO:0000250" key="1"/>
<evidence type="ECO:0000250" key="2">
    <source>
        <dbReference type="UniProtKB" id="P02628"/>
    </source>
</evidence>
<evidence type="ECO:0000255" key="3"/>
<evidence type="ECO:0000255" key="4">
    <source>
        <dbReference type="PROSITE-ProRule" id="PRU00448"/>
    </source>
</evidence>
<evidence type="ECO:0000305" key="5"/>
<evidence type="ECO:0000312" key="6">
    <source>
        <dbReference type="EMBL" id="AAH76256.1"/>
    </source>
</evidence>
<evidence type="ECO:0000312" key="7">
    <source>
        <dbReference type="EMBL" id="AAO33398.1"/>
    </source>
</evidence>
<keyword id="KW-0007">Acetylation</keyword>
<keyword id="KW-0106">Calcium</keyword>
<keyword id="KW-0479">Metal-binding</keyword>
<keyword id="KW-0514">Muscle protein</keyword>
<keyword id="KW-1185">Reference proteome</keyword>
<keyword id="KW-0677">Repeat</keyword>
<proteinExistence type="inferred from homology"/>
<name>PRV7_DANRE</name>
<protein>
    <recommendedName>
        <fullName>Parvalbumin-7</fullName>
    </recommendedName>
    <alternativeName>
        <fullName>Parvalbumin alpha</fullName>
    </alternativeName>
    <alternativeName>
        <fullName>Parvalbumin-4a</fullName>
    </alternativeName>
</protein>
<accession>Q804W2</accession>
<accession>Q6DGT3</accession>
<gene>
    <name type="primary">pvalb7</name>
    <name type="synonym">pvalb</name>
</gene>
<feature type="initiator methionine" description="Removed" evidence="1">
    <location>
        <position position="1"/>
    </location>
</feature>
<feature type="chain" id="PRO_0000073593" description="Parvalbumin-7">
    <location>
        <begin position="2"/>
        <end position="109"/>
    </location>
</feature>
<feature type="domain" description="EF-hand 1" evidence="4">
    <location>
        <begin position="39"/>
        <end position="74"/>
    </location>
</feature>
<feature type="domain" description="EF-hand 2" evidence="4">
    <location>
        <begin position="78"/>
        <end position="109"/>
    </location>
</feature>
<feature type="binding site" evidence="4">
    <location>
        <position position="52"/>
    </location>
    <ligand>
        <name>Ca(2+)</name>
        <dbReference type="ChEBI" id="CHEBI:29108"/>
        <label>1</label>
    </ligand>
</feature>
<feature type="binding site" evidence="4">
    <location>
        <position position="54"/>
    </location>
    <ligand>
        <name>Ca(2+)</name>
        <dbReference type="ChEBI" id="CHEBI:29108"/>
        <label>1</label>
    </ligand>
</feature>
<feature type="binding site" evidence="4">
    <location>
        <position position="56"/>
    </location>
    <ligand>
        <name>Ca(2+)</name>
        <dbReference type="ChEBI" id="CHEBI:29108"/>
        <label>1</label>
    </ligand>
</feature>
<feature type="binding site" evidence="2">
    <location>
        <position position="58"/>
    </location>
    <ligand>
        <name>Ca(2+)</name>
        <dbReference type="ChEBI" id="CHEBI:29108"/>
        <label>1</label>
    </ligand>
</feature>
<feature type="binding site" evidence="2">
    <location>
        <position position="60"/>
    </location>
    <ligand>
        <name>Ca(2+)</name>
        <dbReference type="ChEBI" id="CHEBI:29108"/>
        <label>1</label>
    </ligand>
</feature>
<feature type="binding site" evidence="4">
    <location>
        <position position="63"/>
    </location>
    <ligand>
        <name>Ca(2+)</name>
        <dbReference type="ChEBI" id="CHEBI:29108"/>
        <label>1</label>
    </ligand>
</feature>
<feature type="binding site" evidence="4">
    <location>
        <position position="91"/>
    </location>
    <ligand>
        <name>Ca(2+)</name>
        <dbReference type="ChEBI" id="CHEBI:29108"/>
        <label>2</label>
    </ligand>
</feature>
<feature type="binding site" evidence="4">
    <location>
        <position position="93"/>
    </location>
    <ligand>
        <name>Ca(2+)</name>
        <dbReference type="ChEBI" id="CHEBI:29108"/>
        <label>2</label>
    </ligand>
</feature>
<feature type="binding site" evidence="4">
    <location>
        <position position="95"/>
    </location>
    <ligand>
        <name>Ca(2+)</name>
        <dbReference type="ChEBI" id="CHEBI:29108"/>
        <label>2</label>
    </ligand>
</feature>
<feature type="binding site" evidence="4">
    <location>
        <position position="97"/>
    </location>
    <ligand>
        <name>Ca(2+)</name>
        <dbReference type="ChEBI" id="CHEBI:29108"/>
        <label>2</label>
    </ligand>
</feature>
<feature type="binding site" evidence="4">
    <location>
        <position position="102"/>
    </location>
    <ligand>
        <name>Ca(2+)</name>
        <dbReference type="ChEBI" id="CHEBI:29108"/>
        <label>2</label>
    </ligand>
</feature>
<feature type="modified residue" description="N-acetylalanine" evidence="1">
    <location>
        <position position="2"/>
    </location>
</feature>
<feature type="sequence conflict" description="In Ref. 1; AAO33398." evidence="5" ref="1">
    <original>L</original>
    <variation>I</variation>
    <location>
        <position position="6"/>
    </location>
</feature>
<reference evidence="5 7" key="1">
    <citation type="submission" date="2002-01" db="EMBL/GenBank/DDBJ databases">
        <title>Molecular cloning and developmental expression of parvalbumin genes in zebrafish.</title>
        <authorList>
            <person name="Hsiao C.-D."/>
            <person name="Tsai W.-Y."/>
            <person name="Tsai H.-J."/>
        </authorList>
    </citation>
    <scope>NUCLEOTIDE SEQUENCE [MRNA]</scope>
    <source>
        <strain>AB</strain>
    </source>
</reference>
<reference evidence="5 7" key="2">
    <citation type="submission" date="2004-07" db="EMBL/GenBank/DDBJ databases">
        <authorList>
            <consortium name="NIH - Zebrafish Gene Collection (ZGC) project"/>
        </authorList>
    </citation>
    <scope>NUCLEOTIDE SEQUENCE [LARGE SCALE MRNA]</scope>
    <source>
        <tissue evidence="6">Brain</tissue>
    </source>
</reference>
<organism>
    <name type="scientific">Danio rerio</name>
    <name type="common">Zebrafish</name>
    <name type="synonym">Brachydanio rerio</name>
    <dbReference type="NCBI Taxonomy" id="7955"/>
    <lineage>
        <taxon>Eukaryota</taxon>
        <taxon>Metazoa</taxon>
        <taxon>Chordata</taxon>
        <taxon>Craniata</taxon>
        <taxon>Vertebrata</taxon>
        <taxon>Euteleostomi</taxon>
        <taxon>Actinopterygii</taxon>
        <taxon>Neopterygii</taxon>
        <taxon>Teleostei</taxon>
        <taxon>Ostariophysi</taxon>
        <taxon>Cypriniformes</taxon>
        <taxon>Danionidae</taxon>
        <taxon>Danioninae</taxon>
        <taxon>Danio</taxon>
    </lineage>
</organism>